<comment type="function">
    <text>Mediates the deacetylation of lysine residues on the N-terminal part of the core histones (H2A, H2B, H3 and H4). Histone deacetylation gives a tag for epigenetic repression and plays an important role in transcriptional regulation, cell cycle progression and developmental events. Able to deacetylate all 4 core histones.</text>
</comment>
<comment type="activity regulation">
    <text evidence="3 4">Inhibited by 3-(4-Aroyl-1-methyl-1H-pyrrol-2-yl)-N-hydroxy-2-propenamides. 3-(1-methyl-4-phenylacetyl-1H-pyrrol-2-yl)-N-hydroxy-2-propenamide 1b and 3-[1-methyl-4-(3-phenyl-2-propenoyl)-1H-pyrrol-2-yl]-N-hydroxy-2-propenamide 1c are very potent inhibitors.</text>
</comment>
<comment type="biophysicochemical properties">
    <kinetics>
        <KM evidence="5">55 uM for core histone</KM>
    </kinetics>
    <phDependence>
        <text evidence="5">Optimum pH is 7.5.</text>
    </phDependence>
</comment>
<comment type="subunit">
    <text evidence="6">Multimer. Isolated as a trimer composed of 3 proteins of 39, 42 and 45 kDa, possibly a homotrimer with different phosphorylation status or a heterotrimer with HDT2 and/or HDT3.</text>
</comment>
<comment type="subcellular location">
    <subcellularLocation>
        <location evidence="6">Nucleus</location>
        <location evidence="6">Nucleolus</location>
    </subcellularLocation>
</comment>
<comment type="developmental stage">
    <text evidence="6">Expressed throughout germination. Increases during the initial 30 hours of germination, slightly decreases between 30 and 48 hours, and increases again at 60 hours, correlating with the proliferative activity of embryo cells.</text>
</comment>
<comment type="PTM">
    <text>The N-terminus is blocked.</text>
</comment>
<comment type="PTM">
    <text evidence="6">Phosphorylated. Required for enzyme activity.</text>
</comment>
<comment type="similarity">
    <text evidence="7">Belongs to the histone deacetylase HD2 family.</text>
</comment>
<accession>O24591</accession>
<protein>
    <recommendedName>
        <fullName>Histone deacetylase HDT1</fullName>
    </recommendedName>
    <alternativeName>
        <fullName>Histone deacetylase 2a</fullName>
        <shortName>HD2a</shortName>
    </alternativeName>
    <alternativeName>
        <fullName>Nucleolar histone deacetylase HD2-p39</fullName>
    </alternativeName>
    <alternativeName>
        <fullName>Zm-HD2a</fullName>
    </alternativeName>
</protein>
<name>HDT1_MAIZE</name>
<keyword id="KW-0156">Chromatin regulator</keyword>
<keyword id="KW-0903">Direct protein sequencing</keyword>
<keyword id="KW-0378">Hydrolase</keyword>
<keyword id="KW-0479">Metal-binding</keyword>
<keyword id="KW-0539">Nucleus</keyword>
<keyword id="KW-0597">Phosphoprotein</keyword>
<keyword id="KW-1185">Reference proteome</keyword>
<keyword id="KW-0678">Repressor</keyword>
<keyword id="KW-0804">Transcription</keyword>
<keyword id="KW-0805">Transcription regulation</keyword>
<keyword id="KW-0862">Zinc</keyword>
<keyword id="KW-0863">Zinc-finger</keyword>
<evidence type="ECO:0000255" key="1">
    <source>
        <dbReference type="PROSITE-ProRule" id="PRU00042"/>
    </source>
</evidence>
<evidence type="ECO:0000256" key="2">
    <source>
        <dbReference type="SAM" id="MobiDB-lite"/>
    </source>
</evidence>
<evidence type="ECO:0000269" key="3">
    <source>
    </source>
</evidence>
<evidence type="ECO:0000269" key="4">
    <source>
    </source>
</evidence>
<evidence type="ECO:0000269" key="5">
    <source>
    </source>
</evidence>
<evidence type="ECO:0000269" key="6">
    <source>
    </source>
</evidence>
<evidence type="ECO:0000305" key="7"/>
<reference key="1">
    <citation type="journal article" date="1997" name="Science">
        <title>Identification of maize histone deacetylase HD2 as an acidic nucleolar phosphoprotein.</title>
        <authorList>
            <person name="Lusser A."/>
            <person name="Brosch G."/>
            <person name="Loidl A."/>
            <person name="Haas H."/>
            <person name="Loidl P."/>
        </authorList>
    </citation>
    <scope>NUCLEOTIDE SEQUENCE [GENOMIC DNA / MRNA]</scope>
    <scope>SUBUNIT</scope>
    <scope>SUBCELLULAR LOCATION</scope>
    <scope>DEVELOPMENTAL STAGE</scope>
    <scope>PHOSPHORYLATION</scope>
    <source>
        <strain>cv. Cuzco 251</strain>
    </source>
</reference>
<reference key="2">
    <citation type="journal article" date="1996" name="Biochemistry">
        <title>Purification and characterization of a high molecular weight histone deacetylase complex (HD2) of maize embryos.</title>
        <authorList>
            <person name="Brosch G."/>
            <person name="Lusser A."/>
            <person name="Goralik-Schramel M."/>
            <person name="Loidl P."/>
        </authorList>
    </citation>
    <scope>PROTEIN SEQUENCE OF 50-103 AND 284-295</scope>
    <scope>BLOCKAGE OF N-TERMINUS</scope>
    <scope>BIOPHYSICOCHEMICAL PROPERTIES</scope>
</reference>
<reference key="3">
    <citation type="journal article" date="1999" name="Biochemistry">
        <title>Different types of maize histone deacetylases are distinguished by a highly complex substrate and site specificity.</title>
        <authorList>
            <person name="Koelle D."/>
            <person name="Brosch G."/>
            <person name="Lechner T."/>
            <person name="Pipal A."/>
            <person name="Helliger W."/>
            <person name="Taplick J."/>
            <person name="Loidl P."/>
        </authorList>
    </citation>
    <scope>SUBSTRATE SPECIFICITY</scope>
</reference>
<reference key="4">
    <citation type="journal article" date="2001" name="Planta">
        <title>Comparative analysis of HD2 type histone deacetylases in higher plants.</title>
        <authorList>
            <person name="Dangl M."/>
            <person name="Brosch G."/>
            <person name="Haas H."/>
            <person name="Loidl P."/>
            <person name="Lusser A."/>
        </authorList>
    </citation>
    <scope>NOMENCLATURE</scope>
</reference>
<reference key="5">
    <citation type="journal article" date="2004" name="J. Med. Chem.">
        <title>3-(4-aroyl-1-methyl-1H-2-pyrrolyl)-N-hydroxy-2-propenamides as a new class of synthetic histone deacetylase inhibitors. 2. Effect of pyrrole-C2 and/or -C4 substitutions on biological activity.</title>
        <authorList>
            <person name="Mai A."/>
            <person name="Massa S."/>
            <person name="Cerbara I."/>
            <person name="Valente S."/>
            <person name="Ragno R."/>
            <person name="Bottoni P."/>
            <person name="Scatena R."/>
            <person name="Loidl P."/>
            <person name="Brosch G."/>
        </authorList>
    </citation>
    <scope>ACTIVITY REGULATION</scope>
</reference>
<reference key="6">
    <citation type="journal article" date="2004" name="J. Med. Chem.">
        <title>3-(4-aroyl-1-methyl-1H-pyrrol-2-yl)-N-hydroxy-2-propenamides as a new class of synthetic histone deacetylase inhibitors. 3. Discovery of novel lead compounds through structure-based drug design and docking studies.</title>
        <authorList>
            <person name="Ragno R."/>
            <person name="Mai A."/>
            <person name="Massa S."/>
            <person name="Cerbara I."/>
            <person name="Valente S."/>
            <person name="Bottoni P."/>
            <person name="Scatena R."/>
            <person name="Jesacher F."/>
            <person name="Loidl P."/>
            <person name="Brosch G."/>
        </authorList>
    </citation>
    <scope>ACTIVITY REGULATION</scope>
</reference>
<sequence length="307" mass="33238">MEFWGLEVKPGSTVKCEPGYGFVLHLSQAALGESKKSDNALMYVKIDDQKLAIGTLSVDKNPHIQFDLIFDKEFELSHTSKTTSVFFTGYKVEQPFEEDEMDLDSEDEDEELNVPVVKENGKADEKKQKSQEKAVAAPSKSSPDSKKSKDDDDSDEDETDDSDEDETDDSDEGLSSEEGDDDSSDEDDTSDDEEEDTPTPKKPEVGKKRPAESSVLKTPLSDKKAKVATPSSQKTGGKKGAAVHVATPHPAKGKTIVNNDKSVKSPKSAPKSGGSVPCKPCSKSFISETALQAHSRAKMGASESQVQ</sequence>
<organism>
    <name type="scientific">Zea mays</name>
    <name type="common">Maize</name>
    <dbReference type="NCBI Taxonomy" id="4577"/>
    <lineage>
        <taxon>Eukaryota</taxon>
        <taxon>Viridiplantae</taxon>
        <taxon>Streptophyta</taxon>
        <taxon>Embryophyta</taxon>
        <taxon>Tracheophyta</taxon>
        <taxon>Spermatophyta</taxon>
        <taxon>Magnoliopsida</taxon>
        <taxon>Liliopsida</taxon>
        <taxon>Poales</taxon>
        <taxon>Poaceae</taxon>
        <taxon>PACMAD clade</taxon>
        <taxon>Panicoideae</taxon>
        <taxon>Andropogonodae</taxon>
        <taxon>Andropogoneae</taxon>
        <taxon>Tripsacinae</taxon>
        <taxon>Zea</taxon>
    </lineage>
</organism>
<feature type="chain" id="PRO_0000195208" description="Histone deacetylase HDT1">
    <location>
        <begin position="1"/>
        <end position="307"/>
    </location>
</feature>
<feature type="zinc finger region" description="C2H2-type; degenerate" evidence="1">
    <location>
        <begin position="276"/>
        <end position="299"/>
    </location>
</feature>
<feature type="region of interest" description="Disordered" evidence="2">
    <location>
        <begin position="98"/>
        <end position="280"/>
    </location>
</feature>
<feature type="compositionally biased region" description="Acidic residues" evidence="2">
    <location>
        <begin position="98"/>
        <end position="112"/>
    </location>
</feature>
<feature type="compositionally biased region" description="Basic and acidic residues" evidence="2">
    <location>
        <begin position="119"/>
        <end position="132"/>
    </location>
</feature>
<feature type="compositionally biased region" description="Acidic residues" evidence="2">
    <location>
        <begin position="151"/>
        <end position="197"/>
    </location>
</feature>
<feature type="compositionally biased region" description="Basic and acidic residues" evidence="2">
    <location>
        <begin position="198"/>
        <end position="211"/>
    </location>
</feature>
<feature type="compositionally biased region" description="Low complexity" evidence="2">
    <location>
        <begin position="265"/>
        <end position="277"/>
    </location>
</feature>
<dbReference type="EMBL" id="U82815">
    <property type="protein sequence ID" value="AAB63262.1"/>
    <property type="molecule type" value="mRNA"/>
</dbReference>
<dbReference type="EMBL" id="AF026917">
    <property type="protein sequence ID" value="AAC61674.1"/>
    <property type="molecule type" value="Genomic_DNA"/>
</dbReference>
<dbReference type="PIR" id="T04141">
    <property type="entry name" value="T04141"/>
</dbReference>
<dbReference type="SMR" id="O24591"/>
<dbReference type="STRING" id="4577.O24591"/>
<dbReference type="iPTMnet" id="O24591"/>
<dbReference type="MaizeGDB" id="314821"/>
<dbReference type="InParanoid" id="O24591"/>
<dbReference type="SABIO-RK" id="O24591"/>
<dbReference type="Proteomes" id="UP000007305">
    <property type="component" value="Unplaced"/>
</dbReference>
<dbReference type="ExpressionAtlas" id="O24591">
    <property type="expression patterns" value="baseline and differential"/>
</dbReference>
<dbReference type="GO" id="GO:0005730">
    <property type="term" value="C:nucleolus"/>
    <property type="evidence" value="ECO:0007669"/>
    <property type="project" value="UniProtKB-SubCell"/>
</dbReference>
<dbReference type="GO" id="GO:0016787">
    <property type="term" value="F:hydrolase activity"/>
    <property type="evidence" value="ECO:0007669"/>
    <property type="project" value="UniProtKB-KW"/>
</dbReference>
<dbReference type="GO" id="GO:0008270">
    <property type="term" value="F:zinc ion binding"/>
    <property type="evidence" value="ECO:0007669"/>
    <property type="project" value="UniProtKB-KW"/>
</dbReference>
<dbReference type="GO" id="GO:0006325">
    <property type="term" value="P:chromatin organization"/>
    <property type="evidence" value="ECO:0007669"/>
    <property type="project" value="UniProtKB-KW"/>
</dbReference>
<dbReference type="FunFam" id="2.60.120.340:FF:000004">
    <property type="entry name" value="Histone deacetylase HDT1"/>
    <property type="match status" value="1"/>
</dbReference>
<dbReference type="Gene3D" id="2.60.120.340">
    <property type="entry name" value="Nucleoplasmin core domain"/>
    <property type="match status" value="1"/>
</dbReference>
<dbReference type="InterPro" id="IPR041232">
    <property type="entry name" value="NPL"/>
</dbReference>
<dbReference type="InterPro" id="IPR013087">
    <property type="entry name" value="Znf_C2H2_type"/>
</dbReference>
<dbReference type="Pfam" id="PF17800">
    <property type="entry name" value="NPL"/>
    <property type="match status" value="1"/>
</dbReference>
<dbReference type="PROSITE" id="PS50157">
    <property type="entry name" value="ZINC_FINGER_C2H2_2"/>
    <property type="match status" value="1"/>
</dbReference>
<proteinExistence type="evidence at protein level"/>
<gene>
    <name type="primary">HDT1</name>
    <name type="synonym">HD2a</name>
</gene>